<feature type="chain" id="PRO_1000101003" description="Large ribosomal subunit protein bL36">
    <location>
        <begin position="1"/>
        <end position="37"/>
    </location>
</feature>
<keyword id="KW-0687">Ribonucleoprotein</keyword>
<keyword id="KW-0689">Ribosomal protein</keyword>
<dbReference type="EMBL" id="CP000048">
    <property type="protein sequence ID" value="AAX17008.1"/>
    <property type="molecule type" value="Genomic_DNA"/>
</dbReference>
<dbReference type="RefSeq" id="WP_002557090.1">
    <property type="nucleotide sequence ID" value="NZ_CP073136.1"/>
</dbReference>
<dbReference type="SMR" id="B2S0K2"/>
<dbReference type="GeneID" id="71843317"/>
<dbReference type="KEGG" id="bhr:BH0499"/>
<dbReference type="HOGENOM" id="CLU_135723_6_2_12"/>
<dbReference type="Proteomes" id="UP000008834">
    <property type="component" value="Chromosome"/>
</dbReference>
<dbReference type="GO" id="GO:0005737">
    <property type="term" value="C:cytoplasm"/>
    <property type="evidence" value="ECO:0007669"/>
    <property type="project" value="UniProtKB-ARBA"/>
</dbReference>
<dbReference type="GO" id="GO:1990904">
    <property type="term" value="C:ribonucleoprotein complex"/>
    <property type="evidence" value="ECO:0007669"/>
    <property type="project" value="UniProtKB-KW"/>
</dbReference>
<dbReference type="GO" id="GO:0005840">
    <property type="term" value="C:ribosome"/>
    <property type="evidence" value="ECO:0007669"/>
    <property type="project" value="UniProtKB-KW"/>
</dbReference>
<dbReference type="GO" id="GO:0003735">
    <property type="term" value="F:structural constituent of ribosome"/>
    <property type="evidence" value="ECO:0007669"/>
    <property type="project" value="InterPro"/>
</dbReference>
<dbReference type="GO" id="GO:0006412">
    <property type="term" value="P:translation"/>
    <property type="evidence" value="ECO:0007669"/>
    <property type="project" value="UniProtKB-UniRule"/>
</dbReference>
<dbReference type="HAMAP" id="MF_00251">
    <property type="entry name" value="Ribosomal_bL36"/>
    <property type="match status" value="1"/>
</dbReference>
<dbReference type="InterPro" id="IPR000473">
    <property type="entry name" value="Ribosomal_bL36"/>
</dbReference>
<dbReference type="InterPro" id="IPR035977">
    <property type="entry name" value="Ribosomal_bL36_sp"/>
</dbReference>
<dbReference type="NCBIfam" id="TIGR01022">
    <property type="entry name" value="rpmJ_bact"/>
    <property type="match status" value="1"/>
</dbReference>
<dbReference type="PANTHER" id="PTHR42888">
    <property type="entry name" value="50S RIBOSOMAL PROTEIN L36, CHLOROPLASTIC"/>
    <property type="match status" value="1"/>
</dbReference>
<dbReference type="PANTHER" id="PTHR42888:SF1">
    <property type="entry name" value="LARGE RIBOSOMAL SUBUNIT PROTEIN BL36C"/>
    <property type="match status" value="1"/>
</dbReference>
<dbReference type="Pfam" id="PF00444">
    <property type="entry name" value="Ribosomal_L36"/>
    <property type="match status" value="1"/>
</dbReference>
<dbReference type="SUPFAM" id="SSF57840">
    <property type="entry name" value="Ribosomal protein L36"/>
    <property type="match status" value="1"/>
</dbReference>
<dbReference type="PROSITE" id="PS00828">
    <property type="entry name" value="RIBOSOMAL_L36"/>
    <property type="match status" value="1"/>
</dbReference>
<name>RL36_BORHD</name>
<comment type="similarity">
    <text evidence="1">Belongs to the bacterial ribosomal protein bL36 family.</text>
</comment>
<protein>
    <recommendedName>
        <fullName evidence="1">Large ribosomal subunit protein bL36</fullName>
    </recommendedName>
    <alternativeName>
        <fullName evidence="2">50S ribosomal protein L36</fullName>
    </alternativeName>
</protein>
<reference key="1">
    <citation type="submission" date="2004-12" db="EMBL/GenBank/DDBJ databases">
        <title>The genome sequence of Borrelia hermsii and Borrelia turicatae: comparative analysis of two agents of endemic N. America relapsing fever.</title>
        <authorList>
            <person name="Porcella S.F."/>
            <person name="Raffel S.J."/>
            <person name="Schrumpf M.E."/>
            <person name="Montgomery B."/>
            <person name="Smith T."/>
            <person name="Schwan T.G."/>
        </authorList>
    </citation>
    <scope>NUCLEOTIDE SEQUENCE [LARGE SCALE GENOMIC DNA]</scope>
    <source>
        <strain>HS1 / DAH</strain>
    </source>
</reference>
<accession>B2S0K2</accession>
<organism>
    <name type="scientific">Borrelia hermsii (strain HS1 / DAH)</name>
    <dbReference type="NCBI Taxonomy" id="314723"/>
    <lineage>
        <taxon>Bacteria</taxon>
        <taxon>Pseudomonadati</taxon>
        <taxon>Spirochaetota</taxon>
        <taxon>Spirochaetia</taxon>
        <taxon>Spirochaetales</taxon>
        <taxon>Borreliaceae</taxon>
        <taxon>Borrelia</taxon>
    </lineage>
</organism>
<evidence type="ECO:0000255" key="1">
    <source>
        <dbReference type="HAMAP-Rule" id="MF_00251"/>
    </source>
</evidence>
<evidence type="ECO:0000305" key="2"/>
<sequence length="37" mass="4405">MKVRVSVKPICEKCKVIKRKGVLRIICDNLKHKQRQK</sequence>
<proteinExistence type="inferred from homology"/>
<gene>
    <name evidence="1" type="primary">rpmJ</name>
    <name type="ordered locus">BH0499</name>
</gene>